<sequence length="21" mass="2424">DKNKKPIRVGGRRPPGFTPFR</sequence>
<feature type="peptide" id="PRO_0000424402" description="Protopolybiakinin-1" evidence="2">
    <location>
        <begin position="1"/>
        <end position="21"/>
    </location>
</feature>
<feature type="region of interest" description="Disordered" evidence="1">
    <location>
        <begin position="1"/>
        <end position="21"/>
    </location>
</feature>
<feature type="compositionally biased region" description="Basic residues" evidence="1">
    <location>
        <begin position="1"/>
        <end position="11"/>
    </location>
</feature>
<organism>
    <name type="scientific">Protopolybia exigua</name>
    <name type="common">Neotropical social wasp</name>
    <dbReference type="NCBI Taxonomy" id="91439"/>
    <lineage>
        <taxon>Eukaryota</taxon>
        <taxon>Metazoa</taxon>
        <taxon>Ecdysozoa</taxon>
        <taxon>Arthropoda</taxon>
        <taxon>Hexapoda</taxon>
        <taxon>Insecta</taxon>
        <taxon>Pterygota</taxon>
        <taxon>Neoptera</taxon>
        <taxon>Endopterygota</taxon>
        <taxon>Hymenoptera</taxon>
        <taxon>Apocrita</taxon>
        <taxon>Aculeata</taxon>
        <taxon>Vespoidea</taxon>
        <taxon>Vespidae</taxon>
        <taxon>Polistinae</taxon>
        <taxon>Epiponini</taxon>
        <taxon>Protopolybia</taxon>
    </lineage>
</organism>
<accession>P0DM70</accession>
<reference key="1">
    <citation type="journal article" date="2006" name="Peptides">
        <title>Two new bradykinin-related peptides from the venom of the social wasp Protopolybia exigua (Saussure).</title>
        <authorList>
            <person name="Mendes M.A."/>
            <person name="Palma M.S."/>
        </authorList>
    </citation>
    <scope>PROTEIN SEQUENCE</scope>
    <scope>SYNTHESIS</scope>
    <scope>FUNCTION</scope>
    <scope>TOXIC DOSE</scope>
    <scope>MASS SPECTROMETRY</scope>
    <scope>SUBCELLULAR LOCATION</scope>
    <source>
        <tissue>Venom</tissue>
    </source>
</reference>
<keyword id="KW-0903">Direct protein sequencing</keyword>
<keyword id="KW-1213">G-protein coupled receptor impairing toxin</keyword>
<keyword id="KW-0467">Mast cell degranulation</keyword>
<keyword id="KW-0964">Secreted</keyword>
<keyword id="KW-0800">Toxin</keyword>
<evidence type="ECO:0000256" key="1">
    <source>
        <dbReference type="SAM" id="MobiDB-lite"/>
    </source>
</evidence>
<evidence type="ECO:0000269" key="2">
    <source>
    </source>
</evidence>
<evidence type="ECO:0000303" key="3">
    <source>
    </source>
</evidence>
<evidence type="ECO:0000305" key="4"/>
<evidence type="ECO:0000305" key="5">
    <source>
    </source>
</evidence>
<proteinExistence type="evidence at protein level"/>
<comment type="function">
    <text evidence="2">Causes constriction of the isolated rat ileum muscles (is 13-fold less potent than bradykinin (BK)), as well as degranulation of mast cells (is 7-fold more potent than BK). In vivo, causes algesic effects. Muscle constriction and algesic effects are partially mediated by bradykinin receptors B2 (BDKRB2).</text>
</comment>
<comment type="subcellular location">
    <subcellularLocation>
        <location evidence="2">Secreted</location>
    </subcellularLocation>
</comment>
<comment type="tissue specificity">
    <text evidence="5">Expressed by the venom gland.</text>
</comment>
<comment type="mass spectrometry" mass="2422.8" method="Electrospray" evidence="2"/>
<comment type="toxic dose">
    <text evidence="2">Dose that causes constriction of the isolated rat ileum muscles (ED(50)) is 3.8 uM. Dose that causes degranulation of mast cells (ED(50)) is 100 uM.</text>
</comment>
<comment type="similarity">
    <text evidence="4">Belongs to the bradykinin-related peptide family.</text>
</comment>
<dbReference type="GO" id="GO:0005576">
    <property type="term" value="C:extracellular region"/>
    <property type="evidence" value="ECO:0007669"/>
    <property type="project" value="UniProtKB-SubCell"/>
</dbReference>
<dbReference type="GO" id="GO:0090729">
    <property type="term" value="F:toxin activity"/>
    <property type="evidence" value="ECO:0007669"/>
    <property type="project" value="UniProtKB-KW"/>
</dbReference>
<name>BRK1_PROEX</name>
<protein>
    <recommendedName>
        <fullName evidence="4">Protopolybiakinin-1</fullName>
    </recommendedName>
    <alternativeName>
        <fullName evidence="3">Bradykinin-related peptide</fullName>
    </alternativeName>
    <alternativeName>
        <fullName evidence="3">Protopolybiakinin-I</fullName>
    </alternativeName>
</protein>